<protein>
    <recommendedName>
        <fullName evidence="1">Small ribosomal subunit protein uS13</fullName>
    </recommendedName>
    <alternativeName>
        <fullName evidence="3">30S ribosomal protein S13</fullName>
    </alternativeName>
</protein>
<organism>
    <name type="scientific">Geobacter sp. (strain M21)</name>
    <dbReference type="NCBI Taxonomy" id="443144"/>
    <lineage>
        <taxon>Bacteria</taxon>
        <taxon>Pseudomonadati</taxon>
        <taxon>Thermodesulfobacteriota</taxon>
        <taxon>Desulfuromonadia</taxon>
        <taxon>Geobacterales</taxon>
        <taxon>Geobacteraceae</taxon>
        <taxon>Geobacter</taxon>
    </lineage>
</organism>
<gene>
    <name evidence="1" type="primary">rpsM</name>
    <name type="ordered locus">GM21_3304</name>
</gene>
<sequence>MARIAGVDLPRNKRIEIALTYIYGIGRSLSQEILTAAGVDMNTRCDNLTEAEVTKIREYIDKNVKVEGDLRRDISMSIKRLMDLGCYRGLRHRKGLPCRGQRTKTNARTRKGPARTVAGKKK</sequence>
<name>RS13_GEOSM</name>
<feature type="chain" id="PRO_1000214396" description="Small ribosomal subunit protein uS13">
    <location>
        <begin position="1"/>
        <end position="122"/>
    </location>
</feature>
<feature type="region of interest" description="Disordered" evidence="2">
    <location>
        <begin position="97"/>
        <end position="122"/>
    </location>
</feature>
<comment type="function">
    <text evidence="1">Located at the top of the head of the 30S subunit, it contacts several helices of the 16S rRNA. In the 70S ribosome it contacts the 23S rRNA (bridge B1a) and protein L5 of the 50S subunit (bridge B1b), connecting the 2 subunits; these bridges are implicated in subunit movement. Contacts the tRNAs in the A and P-sites.</text>
</comment>
<comment type="subunit">
    <text evidence="1">Part of the 30S ribosomal subunit. Forms a loose heterodimer with protein S19. Forms two bridges to the 50S subunit in the 70S ribosome.</text>
</comment>
<comment type="similarity">
    <text evidence="1">Belongs to the universal ribosomal protein uS13 family.</text>
</comment>
<reference key="1">
    <citation type="submission" date="2009-07" db="EMBL/GenBank/DDBJ databases">
        <title>Complete sequence of Geobacter sp. M21.</title>
        <authorList>
            <consortium name="US DOE Joint Genome Institute"/>
            <person name="Lucas S."/>
            <person name="Copeland A."/>
            <person name="Lapidus A."/>
            <person name="Glavina del Rio T."/>
            <person name="Dalin E."/>
            <person name="Tice H."/>
            <person name="Bruce D."/>
            <person name="Goodwin L."/>
            <person name="Pitluck S."/>
            <person name="Saunders E."/>
            <person name="Brettin T."/>
            <person name="Detter J.C."/>
            <person name="Han C."/>
            <person name="Larimer F."/>
            <person name="Land M."/>
            <person name="Hauser L."/>
            <person name="Kyrpides N."/>
            <person name="Ovchinnikova G."/>
            <person name="Lovley D."/>
        </authorList>
    </citation>
    <scope>NUCLEOTIDE SEQUENCE [LARGE SCALE GENOMIC DNA]</scope>
    <source>
        <strain>M21</strain>
    </source>
</reference>
<accession>C6E4N3</accession>
<evidence type="ECO:0000255" key="1">
    <source>
        <dbReference type="HAMAP-Rule" id="MF_01315"/>
    </source>
</evidence>
<evidence type="ECO:0000256" key="2">
    <source>
        <dbReference type="SAM" id="MobiDB-lite"/>
    </source>
</evidence>
<evidence type="ECO:0000305" key="3"/>
<dbReference type="EMBL" id="CP001661">
    <property type="protein sequence ID" value="ACT19329.1"/>
    <property type="molecule type" value="Genomic_DNA"/>
</dbReference>
<dbReference type="SMR" id="C6E4N3"/>
<dbReference type="STRING" id="443144.GM21_3304"/>
<dbReference type="KEGG" id="gem:GM21_3304"/>
<dbReference type="eggNOG" id="COG0099">
    <property type="taxonomic scope" value="Bacteria"/>
</dbReference>
<dbReference type="HOGENOM" id="CLU_103849_1_2_7"/>
<dbReference type="OrthoDB" id="9803610at2"/>
<dbReference type="GO" id="GO:0005829">
    <property type="term" value="C:cytosol"/>
    <property type="evidence" value="ECO:0007669"/>
    <property type="project" value="TreeGrafter"/>
</dbReference>
<dbReference type="GO" id="GO:0015935">
    <property type="term" value="C:small ribosomal subunit"/>
    <property type="evidence" value="ECO:0007669"/>
    <property type="project" value="TreeGrafter"/>
</dbReference>
<dbReference type="GO" id="GO:0019843">
    <property type="term" value="F:rRNA binding"/>
    <property type="evidence" value="ECO:0007669"/>
    <property type="project" value="UniProtKB-UniRule"/>
</dbReference>
<dbReference type="GO" id="GO:0003735">
    <property type="term" value="F:structural constituent of ribosome"/>
    <property type="evidence" value="ECO:0007669"/>
    <property type="project" value="InterPro"/>
</dbReference>
<dbReference type="GO" id="GO:0000049">
    <property type="term" value="F:tRNA binding"/>
    <property type="evidence" value="ECO:0007669"/>
    <property type="project" value="UniProtKB-UniRule"/>
</dbReference>
<dbReference type="GO" id="GO:0006412">
    <property type="term" value="P:translation"/>
    <property type="evidence" value="ECO:0007669"/>
    <property type="project" value="UniProtKB-UniRule"/>
</dbReference>
<dbReference type="FunFam" id="1.10.8.50:FF:000001">
    <property type="entry name" value="30S ribosomal protein S13"/>
    <property type="match status" value="1"/>
</dbReference>
<dbReference type="FunFam" id="4.10.910.10:FF:000001">
    <property type="entry name" value="30S ribosomal protein S13"/>
    <property type="match status" value="1"/>
</dbReference>
<dbReference type="Gene3D" id="1.10.8.50">
    <property type="match status" value="1"/>
</dbReference>
<dbReference type="Gene3D" id="4.10.910.10">
    <property type="entry name" value="30s ribosomal protein s13, domain 2"/>
    <property type="match status" value="1"/>
</dbReference>
<dbReference type="HAMAP" id="MF_01315">
    <property type="entry name" value="Ribosomal_uS13"/>
    <property type="match status" value="1"/>
</dbReference>
<dbReference type="InterPro" id="IPR027437">
    <property type="entry name" value="Rbsml_uS13_C"/>
</dbReference>
<dbReference type="InterPro" id="IPR001892">
    <property type="entry name" value="Ribosomal_uS13"/>
</dbReference>
<dbReference type="InterPro" id="IPR010979">
    <property type="entry name" value="Ribosomal_uS13-like_H2TH"/>
</dbReference>
<dbReference type="InterPro" id="IPR019980">
    <property type="entry name" value="Ribosomal_uS13_bac-type"/>
</dbReference>
<dbReference type="InterPro" id="IPR018269">
    <property type="entry name" value="Ribosomal_uS13_CS"/>
</dbReference>
<dbReference type="NCBIfam" id="TIGR03631">
    <property type="entry name" value="uS13_bact"/>
    <property type="match status" value="1"/>
</dbReference>
<dbReference type="PANTHER" id="PTHR10871">
    <property type="entry name" value="30S RIBOSOMAL PROTEIN S13/40S RIBOSOMAL PROTEIN S18"/>
    <property type="match status" value="1"/>
</dbReference>
<dbReference type="PANTHER" id="PTHR10871:SF1">
    <property type="entry name" value="SMALL RIBOSOMAL SUBUNIT PROTEIN US13M"/>
    <property type="match status" value="1"/>
</dbReference>
<dbReference type="Pfam" id="PF00416">
    <property type="entry name" value="Ribosomal_S13"/>
    <property type="match status" value="1"/>
</dbReference>
<dbReference type="PIRSF" id="PIRSF002134">
    <property type="entry name" value="Ribosomal_S13"/>
    <property type="match status" value="1"/>
</dbReference>
<dbReference type="SUPFAM" id="SSF46946">
    <property type="entry name" value="S13-like H2TH domain"/>
    <property type="match status" value="1"/>
</dbReference>
<dbReference type="PROSITE" id="PS00646">
    <property type="entry name" value="RIBOSOMAL_S13_1"/>
    <property type="match status" value="1"/>
</dbReference>
<dbReference type="PROSITE" id="PS50159">
    <property type="entry name" value="RIBOSOMAL_S13_2"/>
    <property type="match status" value="1"/>
</dbReference>
<keyword id="KW-0687">Ribonucleoprotein</keyword>
<keyword id="KW-0689">Ribosomal protein</keyword>
<keyword id="KW-0694">RNA-binding</keyword>
<keyword id="KW-0699">rRNA-binding</keyword>
<keyword id="KW-0820">tRNA-binding</keyword>
<proteinExistence type="inferred from homology"/>